<reference key="1">
    <citation type="journal article" date="2011" name="J. Bacteriol.">
        <title>Genome sequence of Thermotoga sp. strain RQ2, a hyperthermophilic bacterium isolated from a geothermally heated region of the seafloor near Ribeira Quente, the Azores.</title>
        <authorList>
            <person name="Swithers K.S."/>
            <person name="DiPippo J.L."/>
            <person name="Bruce D.C."/>
            <person name="Detter C."/>
            <person name="Tapia R."/>
            <person name="Han S."/>
            <person name="Saunders E."/>
            <person name="Goodwin L.A."/>
            <person name="Han J."/>
            <person name="Woyke T."/>
            <person name="Pitluck S."/>
            <person name="Pennacchio L."/>
            <person name="Nolan M."/>
            <person name="Mikhailova N."/>
            <person name="Lykidis A."/>
            <person name="Land M.L."/>
            <person name="Brettin T."/>
            <person name="Stetter K.O."/>
            <person name="Nelson K.E."/>
            <person name="Gogarten J.P."/>
            <person name="Noll K.M."/>
        </authorList>
    </citation>
    <scope>NUCLEOTIDE SEQUENCE [LARGE SCALE GENOMIC DNA]</scope>
    <source>
        <strain>RQ2</strain>
    </source>
</reference>
<gene>
    <name evidence="1" type="primary">groEL</name>
    <name evidence="1" type="synonym">groL</name>
    <name type="ordered locus">TRQ2_0430</name>
</gene>
<name>CH60_THESQ</name>
<keyword id="KW-0067">ATP-binding</keyword>
<keyword id="KW-0143">Chaperone</keyword>
<keyword id="KW-0963">Cytoplasm</keyword>
<keyword id="KW-0413">Isomerase</keyword>
<keyword id="KW-0547">Nucleotide-binding</keyword>
<sequence>MPKILKFNEEARRALERGVDKVANAVKVTLGPKGRNVVIEKSWGSPTITNDGVSIAKEIELEDKFENLGAQLVKEVASKTNDVAGDGTTTATVLAQAMIKEGLKNVAAGANPILLKRGIDKAVEKAVEEIKKVSKKLSGREDIAHVAAISANSAEIGELIAEAMDKVGEDGVITVEDSKTLETYVEFTEGMQFDRGYISPYFVTDAEKMEVVLKEPFILITDRKLSAVKPLIPILEKVAQTGRPLLVIAEDVEGEVLTTLVLNKLKGTLQSCAVKAPGFGERRKAMLQDIAILTGGQVASEELGINLEDLTLEDLGRADLVRVKKDETIIIGGKGDPEAIKKRIAQIKAQIEETTSEYEKETLQERMAKLAGGVAVIKVGAATETELKEKKHRIEDALSATRAAVEEGIVPGGGVTLLRARKAVEKVIEELEGDEKIGAQIVYKALSAPIKQIAENAGYDGAVIIEKILSNDDPAYGFDALRGEYCNMFERGIIDPAKVTRSALQNAASIAGMLLTTEVLIVEKPEEKKETPSIPEEF</sequence>
<proteinExistence type="inferred from homology"/>
<accession>B1L8Y8</accession>
<comment type="function">
    <text evidence="1">Together with its co-chaperonin GroES, plays an essential role in assisting protein folding. The GroEL-GroES system forms a nano-cage that allows encapsulation of the non-native substrate proteins and provides a physical environment optimized to promote and accelerate protein folding.</text>
</comment>
<comment type="catalytic activity">
    <reaction evidence="1">
        <text>ATP + H2O + a folded polypeptide = ADP + phosphate + an unfolded polypeptide.</text>
        <dbReference type="EC" id="5.6.1.7"/>
    </reaction>
</comment>
<comment type="subunit">
    <text evidence="1">Forms a cylinder of 14 subunits composed of two heptameric rings stacked back-to-back. Interacts with the co-chaperonin GroES.</text>
</comment>
<comment type="subcellular location">
    <subcellularLocation>
        <location evidence="1">Cytoplasm</location>
    </subcellularLocation>
</comment>
<comment type="similarity">
    <text evidence="1">Belongs to the chaperonin (HSP60) family.</text>
</comment>
<evidence type="ECO:0000255" key="1">
    <source>
        <dbReference type="HAMAP-Rule" id="MF_00600"/>
    </source>
</evidence>
<dbReference type="EC" id="5.6.1.7" evidence="1"/>
<dbReference type="EMBL" id="CP000969">
    <property type="protein sequence ID" value="ACB08786.1"/>
    <property type="molecule type" value="Genomic_DNA"/>
</dbReference>
<dbReference type="RefSeq" id="WP_008192177.1">
    <property type="nucleotide sequence ID" value="NC_010483.1"/>
</dbReference>
<dbReference type="SMR" id="B1L8Y8"/>
<dbReference type="KEGG" id="trq:TRQ2_0430"/>
<dbReference type="HOGENOM" id="CLU_016503_3_0_0"/>
<dbReference type="Proteomes" id="UP000001687">
    <property type="component" value="Chromosome"/>
</dbReference>
<dbReference type="GO" id="GO:0005737">
    <property type="term" value="C:cytoplasm"/>
    <property type="evidence" value="ECO:0007669"/>
    <property type="project" value="UniProtKB-SubCell"/>
</dbReference>
<dbReference type="GO" id="GO:0005524">
    <property type="term" value="F:ATP binding"/>
    <property type="evidence" value="ECO:0007669"/>
    <property type="project" value="UniProtKB-UniRule"/>
</dbReference>
<dbReference type="GO" id="GO:0140662">
    <property type="term" value="F:ATP-dependent protein folding chaperone"/>
    <property type="evidence" value="ECO:0007669"/>
    <property type="project" value="InterPro"/>
</dbReference>
<dbReference type="GO" id="GO:0016853">
    <property type="term" value="F:isomerase activity"/>
    <property type="evidence" value="ECO:0007669"/>
    <property type="project" value="UniProtKB-KW"/>
</dbReference>
<dbReference type="GO" id="GO:0051082">
    <property type="term" value="F:unfolded protein binding"/>
    <property type="evidence" value="ECO:0007669"/>
    <property type="project" value="UniProtKB-UniRule"/>
</dbReference>
<dbReference type="GO" id="GO:0042026">
    <property type="term" value="P:protein refolding"/>
    <property type="evidence" value="ECO:0007669"/>
    <property type="project" value="UniProtKB-UniRule"/>
</dbReference>
<dbReference type="CDD" id="cd03344">
    <property type="entry name" value="GroEL"/>
    <property type="match status" value="1"/>
</dbReference>
<dbReference type="FunFam" id="1.10.560.10:FF:000001">
    <property type="entry name" value="60 kDa chaperonin"/>
    <property type="match status" value="1"/>
</dbReference>
<dbReference type="FunFam" id="3.50.7.10:FF:000001">
    <property type="entry name" value="60 kDa chaperonin"/>
    <property type="match status" value="1"/>
</dbReference>
<dbReference type="Gene3D" id="3.50.7.10">
    <property type="entry name" value="GroEL"/>
    <property type="match status" value="1"/>
</dbReference>
<dbReference type="Gene3D" id="1.10.560.10">
    <property type="entry name" value="GroEL-like equatorial domain"/>
    <property type="match status" value="1"/>
</dbReference>
<dbReference type="Gene3D" id="3.30.260.10">
    <property type="entry name" value="TCP-1-like chaperonin intermediate domain"/>
    <property type="match status" value="1"/>
</dbReference>
<dbReference type="HAMAP" id="MF_00600">
    <property type="entry name" value="CH60"/>
    <property type="match status" value="1"/>
</dbReference>
<dbReference type="InterPro" id="IPR018370">
    <property type="entry name" value="Chaperonin_Cpn60_CS"/>
</dbReference>
<dbReference type="InterPro" id="IPR001844">
    <property type="entry name" value="Cpn60/GroEL"/>
</dbReference>
<dbReference type="InterPro" id="IPR002423">
    <property type="entry name" value="Cpn60/GroEL/TCP-1"/>
</dbReference>
<dbReference type="InterPro" id="IPR027409">
    <property type="entry name" value="GroEL-like_apical_dom_sf"/>
</dbReference>
<dbReference type="InterPro" id="IPR027413">
    <property type="entry name" value="GROEL-like_equatorial_sf"/>
</dbReference>
<dbReference type="InterPro" id="IPR027410">
    <property type="entry name" value="TCP-1-like_intermed_sf"/>
</dbReference>
<dbReference type="NCBIfam" id="TIGR02348">
    <property type="entry name" value="GroEL"/>
    <property type="match status" value="1"/>
</dbReference>
<dbReference type="NCBIfam" id="NF000592">
    <property type="entry name" value="PRK00013.1"/>
    <property type="match status" value="1"/>
</dbReference>
<dbReference type="NCBIfam" id="NF009487">
    <property type="entry name" value="PRK12849.1"/>
    <property type="match status" value="1"/>
</dbReference>
<dbReference type="NCBIfam" id="NF009488">
    <property type="entry name" value="PRK12850.1"/>
    <property type="match status" value="1"/>
</dbReference>
<dbReference type="NCBIfam" id="NF009489">
    <property type="entry name" value="PRK12851.1"/>
    <property type="match status" value="1"/>
</dbReference>
<dbReference type="PANTHER" id="PTHR45633">
    <property type="entry name" value="60 KDA HEAT SHOCK PROTEIN, MITOCHONDRIAL"/>
    <property type="match status" value="1"/>
</dbReference>
<dbReference type="Pfam" id="PF00118">
    <property type="entry name" value="Cpn60_TCP1"/>
    <property type="match status" value="1"/>
</dbReference>
<dbReference type="PRINTS" id="PR00298">
    <property type="entry name" value="CHAPERONIN60"/>
</dbReference>
<dbReference type="SUPFAM" id="SSF52029">
    <property type="entry name" value="GroEL apical domain-like"/>
    <property type="match status" value="1"/>
</dbReference>
<dbReference type="SUPFAM" id="SSF48592">
    <property type="entry name" value="GroEL equatorial domain-like"/>
    <property type="match status" value="1"/>
</dbReference>
<dbReference type="SUPFAM" id="SSF54849">
    <property type="entry name" value="GroEL-intermediate domain like"/>
    <property type="match status" value="1"/>
</dbReference>
<dbReference type="PROSITE" id="PS00296">
    <property type="entry name" value="CHAPERONINS_CPN60"/>
    <property type="match status" value="1"/>
</dbReference>
<protein>
    <recommendedName>
        <fullName evidence="1">Chaperonin GroEL</fullName>
        <ecNumber evidence="1">5.6.1.7</ecNumber>
    </recommendedName>
    <alternativeName>
        <fullName evidence="1">60 kDa chaperonin</fullName>
    </alternativeName>
    <alternativeName>
        <fullName evidence="1">Chaperonin-60</fullName>
        <shortName evidence="1">Cpn60</shortName>
    </alternativeName>
</protein>
<feature type="chain" id="PRO_1000130072" description="Chaperonin GroEL">
    <location>
        <begin position="1"/>
        <end position="538"/>
    </location>
</feature>
<feature type="binding site" evidence="1">
    <location>
        <begin position="29"/>
        <end position="32"/>
    </location>
    <ligand>
        <name>ATP</name>
        <dbReference type="ChEBI" id="CHEBI:30616"/>
    </ligand>
</feature>
<feature type="binding site" evidence="1">
    <location>
        <begin position="86"/>
        <end position="90"/>
    </location>
    <ligand>
        <name>ATP</name>
        <dbReference type="ChEBI" id="CHEBI:30616"/>
    </ligand>
</feature>
<feature type="binding site" evidence="1">
    <location>
        <position position="413"/>
    </location>
    <ligand>
        <name>ATP</name>
        <dbReference type="ChEBI" id="CHEBI:30616"/>
    </ligand>
</feature>
<feature type="binding site" evidence="1">
    <location>
        <begin position="479"/>
        <end position="481"/>
    </location>
    <ligand>
        <name>ATP</name>
        <dbReference type="ChEBI" id="CHEBI:30616"/>
    </ligand>
</feature>
<feature type="binding site" evidence="1">
    <location>
        <position position="495"/>
    </location>
    <ligand>
        <name>ATP</name>
        <dbReference type="ChEBI" id="CHEBI:30616"/>
    </ligand>
</feature>
<organism>
    <name type="scientific">Thermotoga sp. (strain RQ2)</name>
    <dbReference type="NCBI Taxonomy" id="126740"/>
    <lineage>
        <taxon>Bacteria</taxon>
        <taxon>Thermotogati</taxon>
        <taxon>Thermotogota</taxon>
        <taxon>Thermotogae</taxon>
        <taxon>Thermotogales</taxon>
        <taxon>Thermotogaceae</taxon>
        <taxon>Thermotoga</taxon>
    </lineage>
</organism>